<organism>
    <name type="scientific">Picosynechococcus sp. (strain ATCC 27264 / PCC 7002 / PR-6)</name>
    <name type="common">Agmenellum quadruplicatum</name>
    <dbReference type="NCBI Taxonomy" id="32049"/>
    <lineage>
        <taxon>Bacteria</taxon>
        <taxon>Bacillati</taxon>
        <taxon>Cyanobacteriota</taxon>
        <taxon>Cyanophyceae</taxon>
        <taxon>Oscillatoriophycideae</taxon>
        <taxon>Chroococcales</taxon>
        <taxon>Geminocystaceae</taxon>
        <taxon>Picosynechococcus</taxon>
    </lineage>
</organism>
<gene>
    <name evidence="1" type="primary">katG</name>
    <name type="ordered locus">SYNPCC7002_A2422</name>
</gene>
<reference key="1">
    <citation type="submission" date="2008-02" db="EMBL/GenBank/DDBJ databases">
        <title>Complete sequence of Synechococcus sp. PCC 7002.</title>
        <authorList>
            <person name="Li T."/>
            <person name="Zhao J."/>
            <person name="Zhao C."/>
            <person name="Liu Z."/>
            <person name="Zhao F."/>
            <person name="Marquardt J."/>
            <person name="Nomura C.T."/>
            <person name="Persson S."/>
            <person name="Detter J.C."/>
            <person name="Richardson P.M."/>
            <person name="Lanz C."/>
            <person name="Schuster S.C."/>
            <person name="Wang J."/>
            <person name="Li S."/>
            <person name="Huang X."/>
            <person name="Cai T."/>
            <person name="Yu Z."/>
            <person name="Luo J."/>
            <person name="Zhao J."/>
            <person name="Bryant D.A."/>
        </authorList>
    </citation>
    <scope>NUCLEOTIDE SEQUENCE [LARGE SCALE GENOMIC DNA]</scope>
    <source>
        <strain>ATCC 27264 / PCC 7002 / PR-6</strain>
    </source>
</reference>
<dbReference type="EC" id="1.11.1.21" evidence="1"/>
<dbReference type="EMBL" id="CP000951">
    <property type="protein sequence ID" value="ACB00400.1"/>
    <property type="molecule type" value="Genomic_DNA"/>
</dbReference>
<dbReference type="SMR" id="B1XK45"/>
<dbReference type="STRING" id="32049.SYNPCC7002_A2422"/>
<dbReference type="PeroxiBase" id="6257">
    <property type="entry name" value="SspCP01_PCC7002"/>
</dbReference>
<dbReference type="KEGG" id="syp:SYNPCC7002_A2422"/>
<dbReference type="eggNOG" id="COG0376">
    <property type="taxonomic scope" value="Bacteria"/>
</dbReference>
<dbReference type="HOGENOM" id="CLU_025424_2_0_3"/>
<dbReference type="Proteomes" id="UP000001688">
    <property type="component" value="Chromosome"/>
</dbReference>
<dbReference type="GO" id="GO:0005829">
    <property type="term" value="C:cytosol"/>
    <property type="evidence" value="ECO:0007669"/>
    <property type="project" value="TreeGrafter"/>
</dbReference>
<dbReference type="GO" id="GO:0004096">
    <property type="term" value="F:catalase activity"/>
    <property type="evidence" value="ECO:0007669"/>
    <property type="project" value="UniProtKB-UniRule"/>
</dbReference>
<dbReference type="GO" id="GO:0020037">
    <property type="term" value="F:heme binding"/>
    <property type="evidence" value="ECO:0007669"/>
    <property type="project" value="InterPro"/>
</dbReference>
<dbReference type="GO" id="GO:0046872">
    <property type="term" value="F:metal ion binding"/>
    <property type="evidence" value="ECO:0007669"/>
    <property type="project" value="UniProtKB-KW"/>
</dbReference>
<dbReference type="GO" id="GO:0070301">
    <property type="term" value="P:cellular response to hydrogen peroxide"/>
    <property type="evidence" value="ECO:0007669"/>
    <property type="project" value="TreeGrafter"/>
</dbReference>
<dbReference type="GO" id="GO:0042744">
    <property type="term" value="P:hydrogen peroxide catabolic process"/>
    <property type="evidence" value="ECO:0007669"/>
    <property type="project" value="UniProtKB-KW"/>
</dbReference>
<dbReference type="CDD" id="cd00649">
    <property type="entry name" value="catalase_peroxidase_1"/>
    <property type="match status" value="1"/>
</dbReference>
<dbReference type="CDD" id="cd08200">
    <property type="entry name" value="catalase_peroxidase_2"/>
    <property type="match status" value="1"/>
</dbReference>
<dbReference type="FunFam" id="1.10.420.10:FF:000002">
    <property type="entry name" value="Catalase-peroxidase"/>
    <property type="match status" value="1"/>
</dbReference>
<dbReference type="FunFam" id="1.10.420.10:FF:000004">
    <property type="entry name" value="Catalase-peroxidase"/>
    <property type="match status" value="1"/>
</dbReference>
<dbReference type="FunFam" id="1.10.520.10:FF:000002">
    <property type="entry name" value="Catalase-peroxidase"/>
    <property type="match status" value="1"/>
</dbReference>
<dbReference type="Gene3D" id="1.10.520.10">
    <property type="match status" value="2"/>
</dbReference>
<dbReference type="Gene3D" id="1.10.420.10">
    <property type="entry name" value="Peroxidase, domain 2"/>
    <property type="match status" value="2"/>
</dbReference>
<dbReference type="HAMAP" id="MF_01961">
    <property type="entry name" value="Catal_peroxid"/>
    <property type="match status" value="1"/>
</dbReference>
<dbReference type="InterPro" id="IPR000763">
    <property type="entry name" value="Catalase_peroxidase"/>
</dbReference>
<dbReference type="InterPro" id="IPR002016">
    <property type="entry name" value="Haem_peroxidase"/>
</dbReference>
<dbReference type="InterPro" id="IPR010255">
    <property type="entry name" value="Haem_peroxidase_sf"/>
</dbReference>
<dbReference type="InterPro" id="IPR019794">
    <property type="entry name" value="Peroxidases_AS"/>
</dbReference>
<dbReference type="NCBIfam" id="TIGR00198">
    <property type="entry name" value="cat_per_HPI"/>
    <property type="match status" value="1"/>
</dbReference>
<dbReference type="NCBIfam" id="NF011635">
    <property type="entry name" value="PRK15061.1"/>
    <property type="match status" value="1"/>
</dbReference>
<dbReference type="PANTHER" id="PTHR30555:SF6">
    <property type="entry name" value="CATALASE-PEROXIDASE"/>
    <property type="match status" value="1"/>
</dbReference>
<dbReference type="PANTHER" id="PTHR30555">
    <property type="entry name" value="HYDROPEROXIDASE I, BIFUNCTIONAL CATALASE-PEROXIDASE"/>
    <property type="match status" value="1"/>
</dbReference>
<dbReference type="Pfam" id="PF00141">
    <property type="entry name" value="peroxidase"/>
    <property type="match status" value="2"/>
</dbReference>
<dbReference type="PRINTS" id="PR00460">
    <property type="entry name" value="BPEROXIDASE"/>
</dbReference>
<dbReference type="PRINTS" id="PR00458">
    <property type="entry name" value="PEROXIDASE"/>
</dbReference>
<dbReference type="SUPFAM" id="SSF48113">
    <property type="entry name" value="Heme-dependent peroxidases"/>
    <property type="match status" value="2"/>
</dbReference>
<dbReference type="PROSITE" id="PS00436">
    <property type="entry name" value="PEROXIDASE_2"/>
    <property type="match status" value="1"/>
</dbReference>
<dbReference type="PROSITE" id="PS50873">
    <property type="entry name" value="PEROXIDASE_4"/>
    <property type="match status" value="1"/>
</dbReference>
<feature type="chain" id="PRO_0000354942" description="Catalase-peroxidase">
    <location>
        <begin position="1"/>
        <end position="725"/>
    </location>
</feature>
<feature type="active site" description="Proton acceptor" evidence="1">
    <location>
        <position position="100"/>
    </location>
</feature>
<feature type="binding site" description="axial binding residue" evidence="1">
    <location>
        <position position="268"/>
    </location>
    <ligand>
        <name>heme b</name>
        <dbReference type="ChEBI" id="CHEBI:60344"/>
    </ligand>
    <ligandPart>
        <name>Fe</name>
        <dbReference type="ChEBI" id="CHEBI:18248"/>
    </ligandPart>
</feature>
<feature type="site" description="Transition state stabilizer" evidence="1">
    <location>
        <position position="96"/>
    </location>
</feature>
<feature type="cross-link" description="Tryptophyl-tyrosyl-methioninium (Trp-Tyr) (with M-253)" evidence="1">
    <location>
        <begin position="99"/>
        <end position="227"/>
    </location>
</feature>
<feature type="cross-link" description="Tryptophyl-tyrosyl-methioninium (Tyr-Met) (with W-99)" evidence="1">
    <location>
        <begin position="227"/>
        <end position="253"/>
    </location>
</feature>
<name>KATG_PICP2</name>
<comment type="function">
    <text evidence="1">Bifunctional enzyme with both catalase and broad-spectrum peroxidase activity.</text>
</comment>
<comment type="catalytic activity">
    <reaction evidence="1">
        <text>H2O2 + AH2 = A + 2 H2O</text>
        <dbReference type="Rhea" id="RHEA:30275"/>
        <dbReference type="ChEBI" id="CHEBI:13193"/>
        <dbReference type="ChEBI" id="CHEBI:15377"/>
        <dbReference type="ChEBI" id="CHEBI:16240"/>
        <dbReference type="ChEBI" id="CHEBI:17499"/>
        <dbReference type="EC" id="1.11.1.21"/>
    </reaction>
</comment>
<comment type="catalytic activity">
    <reaction evidence="1">
        <text>2 H2O2 = O2 + 2 H2O</text>
        <dbReference type="Rhea" id="RHEA:20309"/>
        <dbReference type="ChEBI" id="CHEBI:15377"/>
        <dbReference type="ChEBI" id="CHEBI:15379"/>
        <dbReference type="ChEBI" id="CHEBI:16240"/>
        <dbReference type="EC" id="1.11.1.21"/>
    </reaction>
</comment>
<comment type="cofactor">
    <cofactor evidence="1">
        <name>heme b</name>
        <dbReference type="ChEBI" id="CHEBI:60344"/>
    </cofactor>
    <text evidence="1">Binds 1 heme b (iron(II)-protoporphyrin IX) group per dimer.</text>
</comment>
<comment type="subunit">
    <text evidence="1">Homodimer or homotetramer.</text>
</comment>
<comment type="PTM">
    <text evidence="1">Formation of the three residue Trp-Tyr-Met cross-link is important for the catalase, but not the peroxidase activity of the enzyme.</text>
</comment>
<comment type="similarity">
    <text evidence="1">Belongs to the peroxidase family. Peroxidase/catalase subfamily.</text>
</comment>
<evidence type="ECO:0000255" key="1">
    <source>
        <dbReference type="HAMAP-Rule" id="MF_01961"/>
    </source>
</evidence>
<sequence>MHDHITNTGGKCPVMHGALTTSSMATNMEWWPKALNLDILHQHDHKTNPMGANFNYQDAVKTLDVDALKRDLHALMTDSQDWWPADWGHYGGLMIRMTWHAAGTYRIADGRGGAGTGNQRFAPINSWPDNTNLDKARRLLWPLKKKYGNKLSWADLIAYAGTIAYESMGLKTFGFAFGREDIWHPEKDIYWGSEKEWLAPSDNPHSRYSGERDLENPLAAVMMGLIYVNPEGVDGNPDPLKTAHDIRITFSRMAMNDEETVALTAGGHTVGKCHGNGDATLLGPEPEAADLDDQGLGWLNKTQRGIGRNTVTSGIEGAWTTYPTQWDNGYFRLLLNYDWELKKSPAGAWQWEPINIKEEDKPVDVEDPSIRLSPIMTDADMAMKMDPDYRQISERFYQDPAYFAETFARAWFKLTHRDMGPKSRYIGPDVPQEDLLWQDPIPAGKTDYDPQAVKDKIAASGLSVSEMVCTAWDSARTFRGSDKRGGANGARIRLAPQKDWAGNEPARLAKVLPVLEAIATESGASVADVIVLAGNVGIEQAAQAAGVEITVPFAPGRGDATAEMTDVEGFAVLEPLHDGYRNWLQKDYVVSPEELMLDRTQLMGLTAPEMTVLVGGMRVLGTNYGGTKHGVLTDREGALTNDFFVNLTDMKYTWKPAGKNLYEIGDRHTGEVKWTATRVDLVFGCNSILRAYAEVYAQDDSNEKFIQDFVAAWTKVMNADRFDLA</sequence>
<proteinExistence type="inferred from homology"/>
<keyword id="KW-0349">Heme</keyword>
<keyword id="KW-0376">Hydrogen peroxide</keyword>
<keyword id="KW-0408">Iron</keyword>
<keyword id="KW-0479">Metal-binding</keyword>
<keyword id="KW-0560">Oxidoreductase</keyword>
<keyword id="KW-0575">Peroxidase</keyword>
<keyword id="KW-1185">Reference proteome</keyword>
<protein>
    <recommendedName>
        <fullName evidence="1">Catalase-peroxidase</fullName>
        <shortName evidence="1">CP</shortName>
        <ecNumber evidence="1">1.11.1.21</ecNumber>
    </recommendedName>
    <alternativeName>
        <fullName evidence="1">Peroxidase/catalase</fullName>
    </alternativeName>
</protein>
<accession>B1XK45</accession>